<sequence>MTRLTLALDVMGGDFGPSVTVPAALQALNANSQLTLLLVGNPDIITPLLAKADFEQRSRLQIIPAQSVIASDARPSQAIRASRGTSMRVALELVKEGRAEACVSAGNTGALMGLAKLLLKPLEGIERPALVTVLPHQQKGKTVVLDLGANVDCDSTMLVQFAVMGAVLAEEVVGIKNPRVALLNIGEEETKGLDSIREASLMLKTVPTINYIGYLEANELLTGKTDVLVCDGFTGNVTLKTMEGVVRMFLSLLKSQGEGKKRSWWLLLLKRWLQKSLTRRFSHLNPDQYNGACLLGLRGTVIKSHGAANQRAFAVAIEQAVQAVQRQVPQRIAARLESVYPAGFEPLDDGKGVNLRAHR</sequence>
<protein>
    <recommendedName>
        <fullName evidence="1">Phosphate acyltransferase</fullName>
        <ecNumber evidence="1">2.3.1.274</ecNumber>
    </recommendedName>
    <alternativeName>
        <fullName evidence="1">Acyl-ACP phosphotransacylase</fullName>
    </alternativeName>
    <alternativeName>
        <fullName evidence="1">Acyl-[acyl-carrier-protein]--phosphate acyltransferase</fullName>
    </alternativeName>
    <alternativeName>
        <fullName evidence="1">Phosphate-acyl-ACP acyltransferase</fullName>
    </alternativeName>
</protein>
<feature type="chain" id="PRO_1000089934" description="Phosphate acyltransferase">
    <location>
        <begin position="1"/>
        <end position="359"/>
    </location>
</feature>
<dbReference type="EC" id="2.3.1.274" evidence="1"/>
<dbReference type="EMBL" id="CP001144">
    <property type="protein sequence ID" value="ACH75399.1"/>
    <property type="molecule type" value="Genomic_DNA"/>
</dbReference>
<dbReference type="RefSeq" id="WP_001518286.1">
    <property type="nucleotide sequence ID" value="NC_011205.1"/>
</dbReference>
<dbReference type="SMR" id="B5FKB5"/>
<dbReference type="KEGG" id="sed:SeD_A2177"/>
<dbReference type="HOGENOM" id="CLU_039379_1_0_6"/>
<dbReference type="UniPathway" id="UPA00085"/>
<dbReference type="Proteomes" id="UP000008322">
    <property type="component" value="Chromosome"/>
</dbReference>
<dbReference type="GO" id="GO:0005737">
    <property type="term" value="C:cytoplasm"/>
    <property type="evidence" value="ECO:0007669"/>
    <property type="project" value="UniProtKB-SubCell"/>
</dbReference>
<dbReference type="GO" id="GO:0043811">
    <property type="term" value="F:phosphate:acyl-[acyl carrier protein] acyltransferase activity"/>
    <property type="evidence" value="ECO:0007669"/>
    <property type="project" value="UniProtKB-UniRule"/>
</dbReference>
<dbReference type="GO" id="GO:0006633">
    <property type="term" value="P:fatty acid biosynthetic process"/>
    <property type="evidence" value="ECO:0007669"/>
    <property type="project" value="UniProtKB-UniRule"/>
</dbReference>
<dbReference type="GO" id="GO:0008654">
    <property type="term" value="P:phospholipid biosynthetic process"/>
    <property type="evidence" value="ECO:0007669"/>
    <property type="project" value="UniProtKB-KW"/>
</dbReference>
<dbReference type="FunFam" id="3.40.718.10:FF:000008">
    <property type="entry name" value="Phosphate acyltransferase"/>
    <property type="match status" value="1"/>
</dbReference>
<dbReference type="Gene3D" id="3.40.718.10">
    <property type="entry name" value="Isopropylmalate Dehydrogenase"/>
    <property type="match status" value="1"/>
</dbReference>
<dbReference type="HAMAP" id="MF_00019">
    <property type="entry name" value="PlsX"/>
    <property type="match status" value="1"/>
</dbReference>
<dbReference type="InterPro" id="IPR003664">
    <property type="entry name" value="FA_synthesis"/>
</dbReference>
<dbReference type="InterPro" id="IPR012281">
    <property type="entry name" value="Phospholipid_synth_PlsX-like"/>
</dbReference>
<dbReference type="NCBIfam" id="TIGR00182">
    <property type="entry name" value="plsX"/>
    <property type="match status" value="1"/>
</dbReference>
<dbReference type="PANTHER" id="PTHR30100">
    <property type="entry name" value="FATTY ACID/PHOSPHOLIPID SYNTHESIS PROTEIN PLSX"/>
    <property type="match status" value="1"/>
</dbReference>
<dbReference type="PANTHER" id="PTHR30100:SF1">
    <property type="entry name" value="PHOSPHATE ACYLTRANSFERASE"/>
    <property type="match status" value="1"/>
</dbReference>
<dbReference type="Pfam" id="PF02504">
    <property type="entry name" value="FA_synthesis"/>
    <property type="match status" value="1"/>
</dbReference>
<dbReference type="PIRSF" id="PIRSF002465">
    <property type="entry name" value="Phsphlp_syn_PlsX"/>
    <property type="match status" value="1"/>
</dbReference>
<dbReference type="SUPFAM" id="SSF53659">
    <property type="entry name" value="Isocitrate/Isopropylmalate dehydrogenase-like"/>
    <property type="match status" value="1"/>
</dbReference>
<keyword id="KW-0963">Cytoplasm</keyword>
<keyword id="KW-0444">Lipid biosynthesis</keyword>
<keyword id="KW-0443">Lipid metabolism</keyword>
<keyword id="KW-0594">Phospholipid biosynthesis</keyword>
<keyword id="KW-1208">Phospholipid metabolism</keyword>
<keyword id="KW-0808">Transferase</keyword>
<accession>B5FKB5</accession>
<comment type="function">
    <text evidence="1">Catalyzes the reversible formation of acyl-phosphate (acyl-PO(4)) from acyl-[acyl-carrier-protein] (acyl-ACP). This enzyme utilizes acyl-ACP as fatty acyl donor, but not acyl-CoA.</text>
</comment>
<comment type="catalytic activity">
    <reaction evidence="1">
        <text>a fatty acyl-[ACP] + phosphate = an acyl phosphate + holo-[ACP]</text>
        <dbReference type="Rhea" id="RHEA:42292"/>
        <dbReference type="Rhea" id="RHEA-COMP:9685"/>
        <dbReference type="Rhea" id="RHEA-COMP:14125"/>
        <dbReference type="ChEBI" id="CHEBI:43474"/>
        <dbReference type="ChEBI" id="CHEBI:59918"/>
        <dbReference type="ChEBI" id="CHEBI:64479"/>
        <dbReference type="ChEBI" id="CHEBI:138651"/>
        <dbReference type="EC" id="2.3.1.274"/>
    </reaction>
</comment>
<comment type="pathway">
    <text evidence="1">Lipid metabolism; phospholipid metabolism.</text>
</comment>
<comment type="subunit">
    <text evidence="1">Homodimer. Probably interacts with PlsY.</text>
</comment>
<comment type="subcellular location">
    <subcellularLocation>
        <location evidence="1">Cytoplasm</location>
    </subcellularLocation>
    <text evidence="1">Associated with the membrane possibly through PlsY.</text>
</comment>
<comment type="similarity">
    <text evidence="1">Belongs to the PlsX family.</text>
</comment>
<name>PLSX_SALDC</name>
<gene>
    <name evidence="1" type="primary">plsX</name>
    <name type="ordered locus">SeD_A2177</name>
</gene>
<evidence type="ECO:0000255" key="1">
    <source>
        <dbReference type="HAMAP-Rule" id="MF_00019"/>
    </source>
</evidence>
<organism>
    <name type="scientific">Salmonella dublin (strain CT_02021853)</name>
    <dbReference type="NCBI Taxonomy" id="439851"/>
    <lineage>
        <taxon>Bacteria</taxon>
        <taxon>Pseudomonadati</taxon>
        <taxon>Pseudomonadota</taxon>
        <taxon>Gammaproteobacteria</taxon>
        <taxon>Enterobacterales</taxon>
        <taxon>Enterobacteriaceae</taxon>
        <taxon>Salmonella</taxon>
    </lineage>
</organism>
<proteinExistence type="inferred from homology"/>
<reference key="1">
    <citation type="journal article" date="2011" name="J. Bacteriol.">
        <title>Comparative genomics of 28 Salmonella enterica isolates: evidence for CRISPR-mediated adaptive sublineage evolution.</title>
        <authorList>
            <person name="Fricke W.F."/>
            <person name="Mammel M.K."/>
            <person name="McDermott P.F."/>
            <person name="Tartera C."/>
            <person name="White D.G."/>
            <person name="Leclerc J.E."/>
            <person name="Ravel J."/>
            <person name="Cebula T.A."/>
        </authorList>
    </citation>
    <scope>NUCLEOTIDE SEQUENCE [LARGE SCALE GENOMIC DNA]</scope>
    <source>
        <strain>CT_02021853</strain>
    </source>
</reference>